<dbReference type="EMBL" id="AJ854042">
    <property type="protein sequence ID" value="CAH69393.1"/>
    <property type="molecule type" value="Genomic_DNA"/>
</dbReference>
<dbReference type="RefSeq" id="YP_001496931.1">
    <property type="nucleotide sequence ID" value="NC_009884.1"/>
</dbReference>
<dbReference type="SMR" id="Q573G3"/>
<dbReference type="KEGG" id="vg:5656079"/>
<dbReference type="Proteomes" id="UP000006364">
    <property type="component" value="Genome"/>
</dbReference>
<proteinExistence type="predicted"/>
<feature type="chain" id="PRO_0000384487" description="Uncharacterized protein ORF62">
    <location>
        <begin position="1"/>
        <end position="62"/>
    </location>
</feature>
<organism>
    <name type="scientific">Acidianus filamentous virus 2 (isolate Italy/Pozzuoli)</name>
    <name type="common">AFV-2</name>
    <dbReference type="NCBI Taxonomy" id="654910"/>
    <lineage>
        <taxon>Viruses</taxon>
        <taxon>Adnaviria</taxon>
        <taxon>Zilligvirae</taxon>
        <taxon>Taleaviricota</taxon>
        <taxon>Tokiviricetes</taxon>
        <taxon>Ligamenvirales</taxon>
        <taxon>Lipothrixviridae</taxon>
        <taxon>Deltalipothrixvirus</taxon>
        <taxon>Acidianus filamentous virus 2</taxon>
    </lineage>
</organism>
<accession>Q573G3</accession>
<protein>
    <recommendedName>
        <fullName>Uncharacterized protein ORF62</fullName>
    </recommendedName>
</protein>
<reference key="1">
    <citation type="journal article" date="2005" name="J. Bacteriol.">
        <title>Structure and genome organization of AFV2, a novel archaeal lipothrixvirus with unusual terminal and core structures.</title>
        <authorList>
            <person name="Haring M."/>
            <person name="Vestergaard G."/>
            <person name="Brugger K."/>
            <person name="Rachel R."/>
            <person name="Garrett R.A."/>
            <person name="Prangishvili D."/>
        </authorList>
    </citation>
    <scope>NUCLEOTIDE SEQUENCE [GENOMIC DNA]</scope>
</reference>
<organismHost>
    <name type="scientific">Acidianus sp. F28</name>
    <dbReference type="NCBI Taxonomy" id="315458"/>
</organismHost>
<keyword id="KW-1185">Reference proteome</keyword>
<gene>
    <name type="ORF">ORF62</name>
</gene>
<sequence length="62" mass="7350">MRDDTTTLRIQKELKKKFEELCESEELPLIKCANLLVSEALTRGYIIKERHELFEKLKKNNA</sequence>
<name>Y062_AFV2P</name>